<reference key="1">
    <citation type="journal article" date="2007" name="BMC Microbiol.">
        <title>Subtle genetic changes enhance virulence of methicillin resistant and sensitive Staphylococcus aureus.</title>
        <authorList>
            <person name="Highlander S.K."/>
            <person name="Hulten K.G."/>
            <person name="Qin X."/>
            <person name="Jiang H."/>
            <person name="Yerrapragada S."/>
            <person name="Mason E.O. Jr."/>
            <person name="Shang Y."/>
            <person name="Williams T.M."/>
            <person name="Fortunov R.M."/>
            <person name="Liu Y."/>
            <person name="Igboeli O."/>
            <person name="Petrosino J."/>
            <person name="Tirumalai M."/>
            <person name="Uzman A."/>
            <person name="Fox G.E."/>
            <person name="Cardenas A.M."/>
            <person name="Muzny D.M."/>
            <person name="Hemphill L."/>
            <person name="Ding Y."/>
            <person name="Dugan S."/>
            <person name="Blyth P.R."/>
            <person name="Buhay C.J."/>
            <person name="Dinh H.H."/>
            <person name="Hawes A.C."/>
            <person name="Holder M."/>
            <person name="Kovar C.L."/>
            <person name="Lee S.L."/>
            <person name="Liu W."/>
            <person name="Nazareth L.V."/>
            <person name="Wang Q."/>
            <person name="Zhou J."/>
            <person name="Kaplan S.L."/>
            <person name="Weinstock G.M."/>
        </authorList>
    </citation>
    <scope>NUCLEOTIDE SEQUENCE [LARGE SCALE GENOMIC DNA]</scope>
    <source>
        <strain>USA300 / TCH1516</strain>
    </source>
</reference>
<comment type="function">
    <text evidence="1">Increases the activity of extracellular murein hydrolases possibly by mediating their export via hole formation. Inhibited by the antiholin-like proteins LrgAB. In an unstressed cell, the LrgAB products probably inhibit the function of the CidAB proteins. When a cell is stressed by the addition of antibiotics or by other factors in the environment, the CidAB proteins possibly oligomerize within the bacterial cell membrane, creating lesions that disrupt the proton motive force, which in turn results in loss of cell viability. These lesions are also hypothesized to regulate the subsequent cell lysis by either allowing the murein hydrolases access to the cell wall substrate and/or regulating their activity by a possible change in the cell wall pH that results from loss of membrane potential.</text>
</comment>
<comment type="subcellular location">
    <subcellularLocation>
        <location evidence="1">Cell membrane</location>
        <topology evidence="1">Multi-pass membrane protein</topology>
    </subcellularLocation>
</comment>
<comment type="similarity">
    <text evidence="1">Belongs to the CidA/LrgA family. CidA subfamily.</text>
</comment>
<name>CIDA_STAAT</name>
<organism>
    <name type="scientific">Staphylococcus aureus (strain USA300 / TCH1516)</name>
    <dbReference type="NCBI Taxonomy" id="451516"/>
    <lineage>
        <taxon>Bacteria</taxon>
        <taxon>Bacillati</taxon>
        <taxon>Bacillota</taxon>
        <taxon>Bacilli</taxon>
        <taxon>Bacillales</taxon>
        <taxon>Staphylococcaceae</taxon>
        <taxon>Staphylococcus</taxon>
    </lineage>
</organism>
<dbReference type="EMBL" id="CP000730">
    <property type="protein sequence ID" value="ABX30519.1"/>
    <property type="molecule type" value="Genomic_DNA"/>
</dbReference>
<dbReference type="RefSeq" id="WP_000549734.1">
    <property type="nucleotide sequence ID" value="NC_010079.1"/>
</dbReference>
<dbReference type="SMR" id="A8Z3D9"/>
<dbReference type="KEGG" id="sax:USA300HOU_2533"/>
<dbReference type="HOGENOM" id="CLU_113736_2_1_9"/>
<dbReference type="GO" id="GO:0005886">
    <property type="term" value="C:plasma membrane"/>
    <property type="evidence" value="ECO:0007669"/>
    <property type="project" value="UniProtKB-SubCell"/>
</dbReference>
<dbReference type="GO" id="GO:0019835">
    <property type="term" value="P:cytolysis"/>
    <property type="evidence" value="ECO:0007669"/>
    <property type="project" value="UniProtKB-UniRule"/>
</dbReference>
<dbReference type="GO" id="GO:0031640">
    <property type="term" value="P:killing of cells of another organism"/>
    <property type="evidence" value="ECO:0007669"/>
    <property type="project" value="UniProtKB-KW"/>
</dbReference>
<dbReference type="GO" id="GO:0012501">
    <property type="term" value="P:programmed cell death"/>
    <property type="evidence" value="ECO:0007669"/>
    <property type="project" value="UniProtKB-UniRule"/>
</dbReference>
<dbReference type="HAMAP" id="MF_01143">
    <property type="entry name" value="CidA"/>
    <property type="match status" value="1"/>
</dbReference>
<dbReference type="InterPro" id="IPR023760">
    <property type="entry name" value="Holin-like_CidA"/>
</dbReference>
<dbReference type="InterPro" id="IPR005538">
    <property type="entry name" value="LrgA/CidA"/>
</dbReference>
<dbReference type="PANTHER" id="PTHR33931:SF2">
    <property type="entry name" value="HOLIN-LIKE PROTEIN CIDA"/>
    <property type="match status" value="1"/>
</dbReference>
<dbReference type="PANTHER" id="PTHR33931">
    <property type="entry name" value="HOLIN-LIKE PROTEIN CIDA-RELATED"/>
    <property type="match status" value="1"/>
</dbReference>
<dbReference type="Pfam" id="PF03788">
    <property type="entry name" value="LrgA"/>
    <property type="match status" value="1"/>
</dbReference>
<feature type="chain" id="PRO_1000085039" description="Holin-like protein CidA">
    <location>
        <begin position="1"/>
        <end position="131"/>
    </location>
</feature>
<feature type="transmembrane region" description="Helical" evidence="1">
    <location>
        <begin position="4"/>
        <end position="24"/>
    </location>
</feature>
<feature type="transmembrane region" description="Helical" evidence="1">
    <location>
        <begin position="30"/>
        <end position="50"/>
    </location>
</feature>
<feature type="transmembrane region" description="Helical" evidence="1">
    <location>
        <begin position="65"/>
        <end position="85"/>
    </location>
</feature>
<feature type="transmembrane region" description="Helical" evidence="1">
    <location>
        <begin position="88"/>
        <end position="108"/>
    </location>
</feature>
<gene>
    <name evidence="1" type="primary">cidA</name>
    <name type="ordered locus">USA300HOU_2533</name>
</gene>
<keyword id="KW-1003">Cell membrane</keyword>
<keyword id="KW-0204">Cytolysis</keyword>
<keyword id="KW-0472">Membrane</keyword>
<keyword id="KW-0812">Transmembrane</keyword>
<keyword id="KW-1133">Transmembrane helix</keyword>
<evidence type="ECO:0000255" key="1">
    <source>
        <dbReference type="HAMAP-Rule" id="MF_01143"/>
    </source>
</evidence>
<accession>A8Z3D9</accession>
<sequence>MHKVQLIIKLLLQLGIIIVITYIGTEIQKIFHLPLAGSIVGLFLFYLLLQFKIVPLTWVEDGANFLLKTMVFFFIPSVVGIMDVASEITLNYILFFAVIIIGTCIVALSSGYIAEKMSVKHKHRKGVDAYE</sequence>
<proteinExistence type="inferred from homology"/>
<protein>
    <recommendedName>
        <fullName evidence="1">Holin-like protein CidA</fullName>
    </recommendedName>
</protein>